<sequence length="85" mass="9377">MNMFITVQIVIVLVLAVLSEAASLPTATERKDAMDEGPNQSDEPEGSVADPSTKDDDYSDSLKQDEKYYKVRLLNTGDKFYGLMG</sequence>
<organism>
    <name type="scientific">Aedes aegypti</name>
    <name type="common">Yellowfever mosquito</name>
    <name type="synonym">Culex aegypti</name>
    <dbReference type="NCBI Taxonomy" id="7159"/>
    <lineage>
        <taxon>Eukaryota</taxon>
        <taxon>Metazoa</taxon>
        <taxon>Ecdysozoa</taxon>
        <taxon>Arthropoda</taxon>
        <taxon>Hexapoda</taxon>
        <taxon>Insecta</taxon>
        <taxon>Pterygota</taxon>
        <taxon>Neoptera</taxon>
        <taxon>Endopterygota</taxon>
        <taxon>Diptera</taxon>
        <taxon>Nematocera</taxon>
        <taxon>Culicoidea</taxon>
        <taxon>Culicidae</taxon>
        <taxon>Culicinae</taxon>
        <taxon>Aedini</taxon>
        <taxon>Aedes</taxon>
        <taxon>Stegomyia</taxon>
    </lineage>
</organism>
<gene>
    <name type="ORF">AAEL000229</name>
</gene>
<comment type="function">
    <text evidence="3 5 6 7 8 9">Vasodilatory peptide (PubMed:1375258, PubMed:35417706). Facilitates mosquito blood feeding on vertebrate host (PubMed:35417706). Induces nitric oxide (NO) release in blood vessels through the activation of the nitric oxide synthase (NOS3) (PubMed:35417706). Enhances endothelial permeability and induces edema at the site of inoculation in the host (PubMed:35417706, PubMed:35675424). Induces host smooth muscle contraction (PubMed:1375258, PubMed:8278354). Down-regulates production of Th1 cytokines, such as IL2 and IFN-gamma (IFNG), in mouse splenocytes (PubMed:10081770). Up-regulates production of Th2 cytokines, such as IL4 and IL10, in mouse splenocytes (PubMed:10081770). Promotes recruitment of host leukocytes, especially neutrophils and CD8+ T cells, to the bite site (PubMed:35417706). Modulates cytokine production by host macrophages (PubMed:35417706). Modulates populations of monocytes/macrophages, plasmacytoid dendritic cells, B cells, CD4+ T cells, NK and NKT cells, shifting mammalian immunity towards Th2 responses (PubMed:36735632).</text>
</comment>
<comment type="function">
    <text evidence="7">(Microbial infection) Promotes Semliki Forest virus infection in the host.</text>
</comment>
<comment type="function">
    <text evidence="6">(Microbial infection) Does not affect Zika virus replication in the host.</text>
</comment>
<comment type="subcellular location">
    <subcellularLocation>
        <location evidence="5">Secreted</location>
    </subcellularLocation>
</comment>
<comment type="tissue specificity">
    <text evidence="4">Expressed exclusively in the medial lobe of female salivary gland (PubMed:10620041). Not detected in female carcass without head and salivary glands (PubMed:10620041). Not detected in male tissues (PubMed:10620041).</text>
</comment>
<comment type="disruption phenotype">
    <text evidence="6 8">Extended probing times when mosquitoes are fed on mouse or chicken but not when fed using an artificial membrane feeder (PubMed:35417706). Reduced blood-feeding success, determined as the percentage of engorged mosquitoes after 90 or 120 sec, when fed on mouse or chicken but not when fed using an artificial membrane feeder (PubMed:35417706). No significant effects on blood meal size, fecundity and fertility (PubMed:35417706). Lower blood perfusion during probing and feeding at the bite site (PubMed:35417706). Reduced endothelial permeability enhancement at the site of inoculation in the host (PubMed:35417706). Fewer recruited leukocytes, especially neutrophils and CD8+ T cells, at the site of inoculation in the host (PubMed:35417706). Fewer B cells in the blood and spleen of the mouse host (PubMed:36735632). No significant effects on the number of B cells or mast cells at the bite site (PubMed:35417706). Increased IL10, IFN-gamma (IFNG) and IL6 levels, and reduced IL-1beta (IL1B) levels in macrophages (PubMed:35417706). More CD11c- monocytes and macrophages in the blood, spleen and bone marrow of the mouse host after mosquito bite with no significant increase in CD11c+ populations (PubMed:36735632). Altered levels of plasmacytoid dendritic cells in the mouse tissues after mosquito bite (PubMed:36735632). More CD4+ T cells in the skin, blood, spleen and bone marrow of the mouse host after mosquito bite (PubMed:36735632). Fewer NKT cells at the bite site (PubMed:36735632). More NK cells in the skin and blood of the mouse host after mosquito bite (PubMed:36735632).</text>
</comment>
<comment type="disruption phenotype">
    <text evidence="7">(Microbial infection) RNAi-mediated knockdown results in reduced ability of mosquito saliva to enhance Semliki Forest virus infection in mammalian cells.</text>
</comment>
<comment type="disruption phenotype">
    <text evidence="6">(Microbial infection) No significant effects on Zika virus infection in mammalian cells.</text>
</comment>
<comment type="similarity">
    <text evidence="13">Belongs to the tachykinin family.</text>
</comment>
<feature type="signal peptide" evidence="1">
    <location>
        <begin position="1"/>
        <end position="23"/>
    </location>
</feature>
<feature type="propeptide" id="PRO_0000344495" evidence="1">
    <location>
        <begin position="24"/>
        <end position="74"/>
    </location>
</feature>
<feature type="peptide" id="PRO_0000460462" description="Sialokinin" evidence="9">
    <location>
        <begin position="75"/>
        <end position="84"/>
    </location>
</feature>
<feature type="region of interest" description="Disordered" evidence="2">
    <location>
        <begin position="26"/>
        <end position="61"/>
    </location>
</feature>
<feature type="compositionally biased region" description="Basic and acidic residues" evidence="2">
    <location>
        <begin position="52"/>
        <end position="61"/>
    </location>
</feature>
<feature type="modified residue" description="Methionine amide" evidence="9">
    <location>
        <position position="84"/>
    </location>
</feature>
<feature type="sequence variant" evidence="9">
    <original>N</original>
    <variation>D</variation>
    <location>
        <position position="75"/>
    </location>
</feature>
<feature type="sequence conflict" description="In Ref. 1; AAD17916." evidence="13" ref="1">
    <original>N</original>
    <variation>K</variation>
    <location>
        <position position="2"/>
    </location>
</feature>
<feature type="sequence conflict" description="In Ref. 1; AAD17916." evidence="13" ref="1">
    <original>L</original>
    <variation>F</variation>
    <location>
        <position position="15"/>
    </location>
</feature>
<feature type="sequence conflict" description="In Ref. 1; AAD17916." evidence="13" ref="1">
    <original>L</original>
    <variation>F</variation>
    <location>
        <position position="24"/>
    </location>
</feature>
<feature type="sequence conflict" description="In Ref. 1; AAD16886/AAD16885." evidence="13" ref="1">
    <original>R</original>
    <variation>T</variation>
    <location>
        <position position="30"/>
    </location>
</feature>
<feature type="sequence conflict" description="In Ref. 1; AAD16886/AAD16885." evidence="13" ref="1">
    <original>DP</original>
    <variation>NT</variation>
    <location>
        <begin position="50"/>
        <end position="51"/>
    </location>
</feature>
<feature type="sequence conflict" description="In Ref. 1; AAD16886/AAD16885." evidence="13" ref="1">
    <original>K</original>
    <variation>E</variation>
    <location>
        <position position="54"/>
    </location>
</feature>
<keyword id="KW-0027">Amidation</keyword>
<keyword id="KW-0903">Direct protein sequencing</keyword>
<keyword id="KW-0391">Immunity</keyword>
<keyword id="KW-0527">Neuropeptide</keyword>
<keyword id="KW-1185">Reference proteome</keyword>
<keyword id="KW-0964">Secreted</keyword>
<keyword id="KW-0732">Signal</keyword>
<keyword id="KW-0838">Vasoactive</keyword>
<keyword id="KW-0840">Vasodilator</keyword>
<name>TKSIA_AEDAE</name>
<accession>P42634</accession>
<accession>P42635</accession>
<accession>Q17PU8</accession>
<accession>Q9TW63</accession>
<accession>Q9UAR7</accession>
<accession>Q9UAR8</accession>
<reference key="1">
    <citation type="journal article" date="1999" name="Insect Mol. Biol.">
        <title>Characterization of the sialokinin I gene encoding the salivary vasodilator of the yellow fever mosquito, Aedes aegypti.</title>
        <authorList>
            <person name="Beerntsen B.T."/>
            <person name="Champagne D.E."/>
            <person name="Coleman J.L."/>
            <person name="Campos Y.A."/>
            <person name="James A.A."/>
        </authorList>
    </citation>
    <scope>NUCLEOTIDE SEQUENCE [GENOMIC DNA / MRNA]</scope>
    <scope>TISSUE SPECIFICITY</scope>
    <source>
        <strain>Rockefeller</strain>
        <tissue>Salivary gland</tissue>
    </source>
</reference>
<reference key="2">
    <citation type="journal article" date="2007" name="Science">
        <title>Genome sequence of Aedes aegypti, a major arbovirus vector.</title>
        <authorList>
            <person name="Nene V."/>
            <person name="Wortman J.R."/>
            <person name="Lawson D."/>
            <person name="Haas B.J."/>
            <person name="Kodira C.D."/>
            <person name="Tu Z.J."/>
            <person name="Loftus B.J."/>
            <person name="Xi Z."/>
            <person name="Megy K."/>
            <person name="Grabherr M."/>
            <person name="Ren Q."/>
            <person name="Zdobnov E.M."/>
            <person name="Lobo N.F."/>
            <person name="Campbell K.S."/>
            <person name="Brown S.E."/>
            <person name="Bonaldo M.F."/>
            <person name="Zhu J."/>
            <person name="Sinkins S.P."/>
            <person name="Hogenkamp D.G."/>
            <person name="Amedeo P."/>
            <person name="Arensburger P."/>
            <person name="Atkinson P.W."/>
            <person name="Bidwell S.L."/>
            <person name="Biedler J."/>
            <person name="Birney E."/>
            <person name="Bruggner R.V."/>
            <person name="Costas J."/>
            <person name="Coy M.R."/>
            <person name="Crabtree J."/>
            <person name="Crawford M."/>
            <person name="DeBruyn B."/>
            <person name="DeCaprio D."/>
            <person name="Eiglmeier K."/>
            <person name="Eisenstadt E."/>
            <person name="El-Dorry H."/>
            <person name="Gelbart W.M."/>
            <person name="Gomes S.L."/>
            <person name="Hammond M."/>
            <person name="Hannick L.I."/>
            <person name="Hogan J.R."/>
            <person name="Holmes M.H."/>
            <person name="Jaffe D."/>
            <person name="Johnston S.J."/>
            <person name="Kennedy R.C."/>
            <person name="Koo H."/>
            <person name="Kravitz S."/>
            <person name="Kriventseva E.V."/>
            <person name="Kulp D."/>
            <person name="Labutti K."/>
            <person name="Lee E."/>
            <person name="Li S."/>
            <person name="Lovin D.D."/>
            <person name="Mao C."/>
            <person name="Mauceli E."/>
            <person name="Menck C.F."/>
            <person name="Miller J.R."/>
            <person name="Montgomery P."/>
            <person name="Mori A."/>
            <person name="Nascimento A.L."/>
            <person name="Naveira H.F."/>
            <person name="Nusbaum C."/>
            <person name="O'Leary S.B."/>
            <person name="Orvis J."/>
            <person name="Pertea M."/>
            <person name="Quesneville H."/>
            <person name="Reidenbach K.R."/>
            <person name="Rogers Y.-H.C."/>
            <person name="Roth C.W."/>
            <person name="Schneider J.R."/>
            <person name="Schatz M."/>
            <person name="Shumway M."/>
            <person name="Stanke M."/>
            <person name="Stinson E.O."/>
            <person name="Tubio J.M.C."/>
            <person name="Vanzee J.P."/>
            <person name="Verjovski-Almeida S."/>
            <person name="Werner D."/>
            <person name="White O.R."/>
            <person name="Wyder S."/>
            <person name="Zeng Q."/>
            <person name="Zhao Q."/>
            <person name="Zhao Y."/>
            <person name="Hill C.A."/>
            <person name="Raikhel A.S."/>
            <person name="Soares M.B."/>
            <person name="Knudson D.L."/>
            <person name="Lee N.H."/>
            <person name="Galagan J."/>
            <person name="Salzberg S.L."/>
            <person name="Paulsen I.T."/>
            <person name="Dimopoulos G."/>
            <person name="Collins F.H."/>
            <person name="Bruce B."/>
            <person name="Fraser-Liggett C.M."/>
            <person name="Severson D.W."/>
        </authorList>
    </citation>
    <scope>NUCLEOTIDE SEQUENCE [LARGE SCALE GENOMIC DNA]</scope>
    <source>
        <strain>LVPib12</strain>
    </source>
</reference>
<reference key="3">
    <citation type="journal article" date="1994" name="Proc. Natl. Acad. Sci. U.S.A.">
        <title>Sialokinin I and II: vasodilatory tachykinins from the yellow fever mosquito Aedes aegypti.</title>
        <authorList>
            <person name="Champagne D.E."/>
            <person name="Ribeiro J.M.C."/>
        </authorList>
    </citation>
    <scope>PROTEIN SEQUENCE OF 75-84</scope>
    <scope>FUNCTION</scope>
    <scope>AMIDATION AT MET-84</scope>
    <scope>VARIANT ASP-75</scope>
    <source>
        <strain>Rockefeller</strain>
        <tissue>Salivary gland</tissue>
    </source>
</reference>
<reference key="4">
    <citation type="journal article" date="1992" name="J. Exp. Biol.">
        <title>Characterization of a vasodilator from the salivary glands of the yellow fever mosquito Aedes aegypti.</title>
        <authorList>
            <person name="Ribeiro J.M."/>
        </authorList>
    </citation>
    <scope>FUNCTION</scope>
    <scope>SUBCELLULAR LOCATION</scope>
</reference>
<reference key="5">
    <citation type="journal article" date="1999" name="Parasite Immunol.">
        <title>Mosquito feeding modulates Th1 and Th2 cytokines in flavivirus susceptible mice: an effect mimicked by injection of sialokinins, but not demonstrated in flavivirus resistant mice.</title>
        <authorList>
            <person name="Zeidner N.S."/>
            <person name="Higgs S."/>
            <person name="Happ C.M."/>
            <person name="Beaty B.J."/>
            <person name="Miller B.R."/>
        </authorList>
    </citation>
    <scope>FUNCTION</scope>
</reference>
<reference key="6">
    <citation type="journal article" date="2022" name="Cell Rep.">
        <title>Aedes aegypti sialokinin facilitates mosquito blood feeding and modulates host immunity and vascular biology.</title>
        <authorList>
            <person name="Martin-Martin I."/>
            <person name="Valenzuela Leon P.C."/>
            <person name="Amo L."/>
            <person name="Shrivastava G."/>
            <person name="Iniguez E."/>
            <person name="Aryan A."/>
            <person name="Brooks S."/>
            <person name="Kojin B.B."/>
            <person name="Williams A.E."/>
            <person name="Bolland S."/>
            <person name="Ackerman H."/>
            <person name="Adelman Z.N."/>
            <person name="Calvo E."/>
        </authorList>
    </citation>
    <scope>FUNCTION</scope>
    <scope>FUNCTION (MICROBIAL INFECTION)</scope>
    <scope>DISRUPTION PHENOTYPE</scope>
    <scope>DISRUPTION PHENOTYPE (MICROBIAL INFECTION)</scope>
    <source>
        <strain evidence="10">Liverpool</strain>
    </source>
</reference>
<reference key="7">
    <citation type="journal article" date="2022" name="Proc. Natl. Acad. Sci. U.S.A.">
        <title>Mosquito saliva enhances virus infection through sialokinin-dependent vascular leakage.</title>
        <authorList>
            <person name="Lefteri D.A."/>
            <person name="Bryden S.R."/>
            <person name="Pingen M."/>
            <person name="Terry S."/>
            <person name="McCafferty A."/>
            <person name="Beswick E.F."/>
            <person name="Georgiev G."/>
            <person name="Van der Laan M."/>
            <person name="Mastrullo V."/>
            <person name="Campagnolo P."/>
            <person name="Waterhouse R.M."/>
            <person name="Varjak M."/>
            <person name="Merits A."/>
            <person name="Fragkoudis R."/>
            <person name="Griffin S."/>
            <person name="Shams K."/>
            <person name="Pondeville E."/>
            <person name="McKimmie C.S."/>
        </authorList>
    </citation>
    <scope>FUNCTION</scope>
    <scope>FUNCTION (MICROBIAL INFECTION)</scope>
    <scope>DISRUPTION PHENOTYPE (MICROBIAL INFECTION)</scope>
    <source>
        <strain evidence="11">Liverpool</strain>
    </source>
</reference>
<reference key="8">
    <citation type="journal article" date="2023" name="PLoS Negl. Trop. Dis.">
        <title>Sialokinin in mosquito saliva shifts human immune responses towards intracellular pathogens.</title>
        <authorList>
            <person name="Spencer Clinton J.L."/>
            <person name="Vogt M.B."/>
            <person name="Kneubehl A.R."/>
            <person name="Hibl B.M."/>
            <person name="Paust S."/>
            <person name="Rico-Hesse R."/>
        </authorList>
    </citation>
    <scope>FUNCTION</scope>
    <scope>DISRUPTION PHENOTYPE</scope>
    <source>
        <strain evidence="12">Liverpool</strain>
        <strain evidence="12">Rockefeller</strain>
    </source>
</reference>
<proteinExistence type="evidence at protein level"/>
<dbReference type="EMBL" id="AF108099">
    <property type="protein sequence ID" value="AAD17916.1"/>
    <property type="molecule type" value="Genomic_DNA"/>
</dbReference>
<dbReference type="EMBL" id="AF108100">
    <property type="protein sequence ID" value="AAD16884.1"/>
    <property type="molecule type" value="mRNA"/>
</dbReference>
<dbReference type="EMBL" id="AF108101">
    <property type="protein sequence ID" value="AAD16885.1"/>
    <property type="molecule type" value="mRNA"/>
</dbReference>
<dbReference type="EMBL" id="AF108102">
    <property type="protein sequence ID" value="AAD16886.1"/>
    <property type="molecule type" value="mRNA"/>
</dbReference>
<dbReference type="EMBL" id="CH477189">
    <property type="protein sequence ID" value="EAT48743.1"/>
    <property type="molecule type" value="Genomic_DNA"/>
</dbReference>
<dbReference type="PIR" id="A49581">
    <property type="entry name" value="A49581"/>
</dbReference>
<dbReference type="PIR" id="B49581">
    <property type="entry name" value="B49581"/>
</dbReference>
<dbReference type="SMR" id="P42634"/>
<dbReference type="STRING" id="7159.P42634"/>
<dbReference type="PaxDb" id="7159-AAEL000229-PA"/>
<dbReference type="EnsemblMetazoa" id="AAEL000229-RA">
    <property type="protein sequence ID" value="AAEL000229-PA"/>
    <property type="gene ID" value="AAEL000229"/>
</dbReference>
<dbReference type="GeneID" id="5572020"/>
<dbReference type="KEGG" id="aag:5572020"/>
<dbReference type="VEuPathDB" id="VectorBase:AAEL000229"/>
<dbReference type="HOGENOM" id="CLU_2514453_0_0_1"/>
<dbReference type="InParanoid" id="P42634"/>
<dbReference type="Proteomes" id="UP000008820">
    <property type="component" value="Chromosome 1"/>
</dbReference>
<dbReference type="Proteomes" id="UP000682892">
    <property type="component" value="Chromosome 1"/>
</dbReference>
<dbReference type="GO" id="GO:0005576">
    <property type="term" value="C:extracellular region"/>
    <property type="evidence" value="ECO:0007669"/>
    <property type="project" value="UniProtKB-SubCell"/>
</dbReference>
<dbReference type="GO" id="GO:0002376">
    <property type="term" value="P:immune system process"/>
    <property type="evidence" value="ECO:0007669"/>
    <property type="project" value="UniProtKB-KW"/>
</dbReference>
<dbReference type="GO" id="GO:0007218">
    <property type="term" value="P:neuropeptide signaling pathway"/>
    <property type="evidence" value="ECO:0007669"/>
    <property type="project" value="UniProtKB-KW"/>
</dbReference>
<dbReference type="GO" id="GO:0042311">
    <property type="term" value="P:vasodilation"/>
    <property type="evidence" value="ECO:0007669"/>
    <property type="project" value="UniProtKB-KW"/>
</dbReference>
<dbReference type="InterPro" id="IPR013055">
    <property type="entry name" value="Tachy_Neuro_lke_CS"/>
</dbReference>
<dbReference type="PROSITE" id="PS00267">
    <property type="entry name" value="TACHYKININ"/>
    <property type="match status" value="1"/>
</dbReference>
<evidence type="ECO:0000255" key="1"/>
<evidence type="ECO:0000256" key="2">
    <source>
        <dbReference type="SAM" id="MobiDB-lite"/>
    </source>
</evidence>
<evidence type="ECO:0000269" key="3">
    <source>
    </source>
</evidence>
<evidence type="ECO:0000269" key="4">
    <source>
    </source>
</evidence>
<evidence type="ECO:0000269" key="5">
    <source>
    </source>
</evidence>
<evidence type="ECO:0000269" key="6">
    <source>
    </source>
</evidence>
<evidence type="ECO:0000269" key="7">
    <source>
    </source>
</evidence>
<evidence type="ECO:0000269" key="8">
    <source>
    </source>
</evidence>
<evidence type="ECO:0000269" key="9">
    <source>
    </source>
</evidence>
<evidence type="ECO:0000303" key="10">
    <source>
    </source>
</evidence>
<evidence type="ECO:0000303" key="11">
    <source>
    </source>
</evidence>
<evidence type="ECO:0000303" key="12">
    <source>
    </source>
</evidence>
<evidence type="ECO:0000305" key="13"/>
<protein>
    <recommendedName>
        <fullName>Prosialokinin</fullName>
    </recommendedName>
    <component>
        <recommendedName>
            <fullName>Sialokinin</fullName>
        </recommendedName>
        <alternativeName>
            <fullName>Sialokinin I</fullName>
            <shortName>Sia I</shortName>
        </alternativeName>
        <alternativeName>
            <fullName>Sialokinin II</fullName>
            <shortName>Sia II</shortName>
        </alternativeName>
        <alternativeName>
            <fullName>Sialokinin-1</fullName>
        </alternativeName>
        <alternativeName>
            <fullName>Sialokinin-2</fullName>
        </alternativeName>
    </component>
</protein>